<gene>
    <name type="primary">IRC22</name>
    <name type="ORF">SCY_1493</name>
</gene>
<reference key="1">
    <citation type="journal article" date="2007" name="Proc. Natl. Acad. Sci. U.S.A.">
        <title>Genome sequencing and comparative analysis of Saccharomyces cerevisiae strain YJM789.</title>
        <authorList>
            <person name="Wei W."/>
            <person name="McCusker J.H."/>
            <person name="Hyman R.W."/>
            <person name="Jones T."/>
            <person name="Ning Y."/>
            <person name="Cao Z."/>
            <person name="Gu Z."/>
            <person name="Bruno D."/>
            <person name="Miranda M."/>
            <person name="Nguyen M."/>
            <person name="Wilhelmy J."/>
            <person name="Komp C."/>
            <person name="Tamse R."/>
            <person name="Wang X."/>
            <person name="Jia P."/>
            <person name="Luedi P."/>
            <person name="Oefner P.J."/>
            <person name="David L."/>
            <person name="Dietrich F.S."/>
            <person name="Li Y."/>
            <person name="Davis R.W."/>
            <person name="Steinmetz L.M."/>
        </authorList>
    </citation>
    <scope>NUCLEOTIDE SEQUENCE [LARGE SCALE GENOMIC DNA]</scope>
    <source>
        <strain>YJM789</strain>
    </source>
</reference>
<proteinExistence type="inferred from homology"/>
<evidence type="ECO:0000250" key="1"/>
<evidence type="ECO:0000255" key="2"/>
<evidence type="ECO:0000256" key="3">
    <source>
        <dbReference type="SAM" id="MobiDB-lite"/>
    </source>
</evidence>
<evidence type="ECO:0000305" key="4"/>
<organism>
    <name type="scientific">Saccharomyces cerevisiae (strain YJM789)</name>
    <name type="common">Baker's yeast</name>
    <dbReference type="NCBI Taxonomy" id="307796"/>
    <lineage>
        <taxon>Eukaryota</taxon>
        <taxon>Fungi</taxon>
        <taxon>Dikarya</taxon>
        <taxon>Ascomycota</taxon>
        <taxon>Saccharomycotina</taxon>
        <taxon>Saccharomycetes</taxon>
        <taxon>Saccharomycetales</taxon>
        <taxon>Saccharomycetaceae</taxon>
        <taxon>Saccharomyces</taxon>
    </lineage>
</organism>
<accession>A6ZQU6</accession>
<protein>
    <recommendedName>
        <fullName>Increased recombination centers protein 22</fullName>
    </recommendedName>
</protein>
<comment type="function">
    <text>Is probably involved in a pathway contributing to genomic integrity.</text>
</comment>
<comment type="subcellular location">
    <subcellularLocation>
        <location evidence="1">Endoplasmic reticulum membrane</location>
        <topology evidence="1">Single-pass type I membrane protein</topology>
    </subcellularLocation>
</comment>
<comment type="similarity">
    <text evidence="4">Belongs to the IRC22 family.</text>
</comment>
<sequence length="225" mass="24992">MRFSMLIGFNLLTALSSFCAAISANNSDNVEHEQEVAEAVAPPSINIEVKYDVVGKESENHDSFLEFYAEDTATLAYNVTNWEDTNITIFGVNGTIVTYPHGYPVADITGASIGPYEMEVNGTSKFGQDVTLNLPEGQYFLIPFLLASRFDEIVRIAAPPTLFEIVSPPISFFNPQFLSVQVIFLAIIGGVSYYYMKSKTNQRPSKKSATVKKVDESWLPETYKK</sequence>
<keyword id="KW-0256">Endoplasmic reticulum</keyword>
<keyword id="KW-0472">Membrane</keyword>
<keyword id="KW-0732">Signal</keyword>
<keyword id="KW-0812">Transmembrane</keyword>
<keyword id="KW-1133">Transmembrane helix</keyword>
<feature type="signal peptide" evidence="2">
    <location>
        <begin position="1"/>
        <end position="21"/>
    </location>
</feature>
<feature type="chain" id="PRO_0000399089" description="Increased recombination centers protein 22">
    <location>
        <begin position="22"/>
        <end position="225"/>
    </location>
</feature>
<feature type="topological domain" description="Lumenal" evidence="2">
    <location>
        <begin position="22"/>
        <end position="169"/>
    </location>
</feature>
<feature type="transmembrane region" description="Helical" evidence="2">
    <location>
        <begin position="170"/>
        <end position="190"/>
    </location>
</feature>
<feature type="topological domain" description="Cytoplasmic" evidence="2">
    <location>
        <begin position="191"/>
        <end position="225"/>
    </location>
</feature>
<feature type="region of interest" description="Disordered" evidence="3">
    <location>
        <begin position="203"/>
        <end position="225"/>
    </location>
</feature>
<feature type="compositionally biased region" description="Basic and acidic residues" evidence="3">
    <location>
        <begin position="212"/>
        <end position="225"/>
    </location>
</feature>
<name>IRC22_YEAS7</name>
<dbReference type="EMBL" id="AAFW02000048">
    <property type="protein sequence ID" value="EDN62966.1"/>
    <property type="molecule type" value="Genomic_DNA"/>
</dbReference>
<dbReference type="HOGENOM" id="CLU_078554_1_0_1"/>
<dbReference type="Proteomes" id="UP000007060">
    <property type="component" value="Unassembled WGS sequence"/>
</dbReference>
<dbReference type="GO" id="GO:0005789">
    <property type="term" value="C:endoplasmic reticulum membrane"/>
    <property type="evidence" value="ECO:0007669"/>
    <property type="project" value="UniProtKB-SubCell"/>
</dbReference>
<dbReference type="InterPro" id="IPR005595">
    <property type="entry name" value="TRAP_alpha"/>
</dbReference>
<dbReference type="Pfam" id="PF03896">
    <property type="entry name" value="TRAP_alpha"/>
    <property type="match status" value="1"/>
</dbReference>